<accession>P35940</accession>
<sequence>MSVKGWSASRPSEKILLTWKRFKRSATSGIKPTSQAKKAEPQVCKRKKSLRISMNHTRQQRDQTVSAMYSKKIREVERTILHLWRQKTVLKRIPKQDLQYDVIMFMITAVKRLRESKMLTVSWYQQALQVIGDSKEEREALMIALKILAKIIPKEMLHLTGDILLALTQTEQLM</sequence>
<organism>
    <name type="scientific">Phocine distemper virus</name>
    <name type="common">PDV</name>
    <dbReference type="NCBI Taxonomy" id="11240"/>
    <lineage>
        <taxon>Viruses</taxon>
        <taxon>Riboviria</taxon>
        <taxon>Orthornavirae</taxon>
        <taxon>Negarnaviricota</taxon>
        <taxon>Haploviricotina</taxon>
        <taxon>Monjiviricetes</taxon>
        <taxon>Mononegavirales</taxon>
        <taxon>Paramyxoviridae</taxon>
        <taxon>Orthoparamyxovirinae</taxon>
        <taxon>Morbillivirus</taxon>
        <taxon>Morbillivirus phocae</taxon>
    </lineage>
</organism>
<comment type="similarity">
    <text evidence="1">Belongs to the morbillivirus protein C family.</text>
</comment>
<protein>
    <recommendedName>
        <fullName>Protein C</fullName>
    </recommendedName>
</protein>
<reference key="1">
    <citation type="journal article" date="1992" name="J. Gen. Virol.">
        <title>The genes encoding the phospho- and matrix proteins of phocine distemper virus.</title>
        <authorList>
            <person name="Curran M.D."/>
            <person name="Rima B.K."/>
        </authorList>
    </citation>
    <scope>NUCLEOTIDE SEQUENCE [GENOMIC RNA]</scope>
    <source>
        <strain>Ulster/88</strain>
    </source>
</reference>
<reference key="2">
    <citation type="journal article" date="1992" name="J. Gen. Virol.">
        <title>Sequence analysis of the genes encoding the nucleocapsid protein and phosphoprotein (P) of phocid distemper virus, and editing of the P gene transcript.</title>
        <authorList>
            <person name="Blixenkrone-Moeller M."/>
            <person name="Sharma B."/>
            <person name="Varsanyi T."/>
            <person name="Hu A."/>
            <person name="Norrby E."/>
            <person name="Koevamees J."/>
        </authorList>
    </citation>
    <scope>NUCLEOTIDE SEQUENCE [GENOMIC RNA]</scope>
    <source>
        <strain>Isolate DK88-4A</strain>
    </source>
</reference>
<gene>
    <name type="primary">P/V/C</name>
</gene>
<evidence type="ECO:0000305" key="1"/>
<organismHost>
    <name type="scientific">Phocidae</name>
    <name type="common">true seals</name>
    <dbReference type="NCBI Taxonomy" id="9709"/>
</organismHost>
<feature type="chain" id="PRO_0000142797" description="Protein C">
    <location>
        <begin position="1"/>
        <end position="174"/>
    </location>
</feature>
<feature type="sequence conflict" description="In Ref. 2; CAA53574." evidence="1" ref="2">
    <original>A</original>
    <variation>V</variation>
    <location>
        <position position="26"/>
    </location>
</feature>
<dbReference type="EMBL" id="D10371">
    <property type="protein sequence ID" value="BAA01204.1"/>
    <property type="molecule type" value="Genomic_RNA"/>
</dbReference>
<dbReference type="EMBL" id="X75960">
    <property type="protein sequence ID" value="CAA53574.1"/>
    <property type="molecule type" value="Genomic_RNA"/>
</dbReference>
<dbReference type="PIR" id="JQ1611">
    <property type="entry name" value="JQ1564"/>
</dbReference>
<dbReference type="OrthoDB" id="10126at10239"/>
<dbReference type="InterPro" id="IPR003875">
    <property type="entry name" value="Paramyxovir_NSC"/>
</dbReference>
<dbReference type="Pfam" id="PF02725">
    <property type="entry name" value="Paramyxo_NS_C"/>
    <property type="match status" value="1"/>
</dbReference>
<name>C_PHODV</name>
<proteinExistence type="inferred from homology"/>